<dbReference type="EC" id="1.11.1.6"/>
<dbReference type="EMBL" id="AJ000472">
    <property type="protein sequence ID" value="CAB76839.1"/>
    <property type="molecule type" value="Genomic_DNA"/>
</dbReference>
<dbReference type="SMR" id="Q9L4S1"/>
<dbReference type="GO" id="GO:0005737">
    <property type="term" value="C:cytoplasm"/>
    <property type="evidence" value="ECO:0007669"/>
    <property type="project" value="TreeGrafter"/>
</dbReference>
<dbReference type="GO" id="GO:0004096">
    <property type="term" value="F:catalase activity"/>
    <property type="evidence" value="ECO:0007669"/>
    <property type="project" value="UniProtKB-EC"/>
</dbReference>
<dbReference type="GO" id="GO:0020037">
    <property type="term" value="F:heme binding"/>
    <property type="evidence" value="ECO:0007669"/>
    <property type="project" value="InterPro"/>
</dbReference>
<dbReference type="GO" id="GO:0046872">
    <property type="term" value="F:metal ion binding"/>
    <property type="evidence" value="ECO:0007669"/>
    <property type="project" value="UniProtKB-KW"/>
</dbReference>
<dbReference type="GO" id="GO:0042744">
    <property type="term" value="P:hydrogen peroxide catabolic process"/>
    <property type="evidence" value="ECO:0007669"/>
    <property type="project" value="UniProtKB-KW"/>
</dbReference>
<dbReference type="GO" id="GO:0042542">
    <property type="term" value="P:response to hydrogen peroxide"/>
    <property type="evidence" value="ECO:0007669"/>
    <property type="project" value="TreeGrafter"/>
</dbReference>
<dbReference type="CDD" id="cd08156">
    <property type="entry name" value="catalase_clade_3"/>
    <property type="match status" value="1"/>
</dbReference>
<dbReference type="FunFam" id="2.40.180.10:FF:000001">
    <property type="entry name" value="Catalase"/>
    <property type="match status" value="1"/>
</dbReference>
<dbReference type="Gene3D" id="2.40.180.10">
    <property type="entry name" value="Catalase core domain"/>
    <property type="match status" value="1"/>
</dbReference>
<dbReference type="InterPro" id="IPR018028">
    <property type="entry name" value="Catalase"/>
</dbReference>
<dbReference type="InterPro" id="IPR040333">
    <property type="entry name" value="Catalase_3"/>
</dbReference>
<dbReference type="InterPro" id="IPR024708">
    <property type="entry name" value="Catalase_AS"/>
</dbReference>
<dbReference type="InterPro" id="IPR024711">
    <property type="entry name" value="Catalase_clade1/3"/>
</dbReference>
<dbReference type="InterPro" id="IPR011614">
    <property type="entry name" value="Catalase_core"/>
</dbReference>
<dbReference type="InterPro" id="IPR002226">
    <property type="entry name" value="Catalase_haem_BS"/>
</dbReference>
<dbReference type="InterPro" id="IPR010582">
    <property type="entry name" value="Catalase_immune_responsive"/>
</dbReference>
<dbReference type="InterPro" id="IPR020835">
    <property type="entry name" value="Catalase_sf"/>
</dbReference>
<dbReference type="PANTHER" id="PTHR11465">
    <property type="entry name" value="CATALASE"/>
    <property type="match status" value="1"/>
</dbReference>
<dbReference type="PANTHER" id="PTHR11465:SF61">
    <property type="entry name" value="CATALASE"/>
    <property type="match status" value="1"/>
</dbReference>
<dbReference type="Pfam" id="PF00199">
    <property type="entry name" value="Catalase"/>
    <property type="match status" value="1"/>
</dbReference>
<dbReference type="Pfam" id="PF06628">
    <property type="entry name" value="Catalase-rel"/>
    <property type="match status" value="1"/>
</dbReference>
<dbReference type="PIRSF" id="PIRSF038928">
    <property type="entry name" value="Catalase_clade1-3"/>
    <property type="match status" value="1"/>
</dbReference>
<dbReference type="PRINTS" id="PR00067">
    <property type="entry name" value="CATALASE"/>
</dbReference>
<dbReference type="SMART" id="SM01060">
    <property type="entry name" value="Catalase"/>
    <property type="match status" value="1"/>
</dbReference>
<dbReference type="SUPFAM" id="SSF56634">
    <property type="entry name" value="Heme-dependent catalase-like"/>
    <property type="match status" value="1"/>
</dbReference>
<dbReference type="PROSITE" id="PS00437">
    <property type="entry name" value="CATALASE_1"/>
    <property type="match status" value="1"/>
</dbReference>
<dbReference type="PROSITE" id="PS00438">
    <property type="entry name" value="CATALASE_2"/>
    <property type="match status" value="1"/>
</dbReference>
<dbReference type="PROSITE" id="PS51402">
    <property type="entry name" value="CATALASE_3"/>
    <property type="match status" value="1"/>
</dbReference>
<organism>
    <name type="scientific">Staphylococcus aureus</name>
    <dbReference type="NCBI Taxonomy" id="1280"/>
    <lineage>
        <taxon>Bacteria</taxon>
        <taxon>Bacillati</taxon>
        <taxon>Bacillota</taxon>
        <taxon>Bacilli</taxon>
        <taxon>Bacillales</taxon>
        <taxon>Staphylococcaceae</taxon>
        <taxon>Staphylococcus</taxon>
    </lineage>
</organism>
<accession>Q9L4S1</accession>
<gene>
    <name type="primary">katA</name>
</gene>
<proteinExistence type="inferred from homology"/>
<feature type="chain" id="PRO_0000085002" description="Catalase">
    <location>
        <begin position="1"/>
        <end position="505"/>
    </location>
</feature>
<feature type="region of interest" description="Disordered" evidence="3">
    <location>
        <begin position="1"/>
        <end position="25"/>
    </location>
</feature>
<feature type="active site" evidence="2">
    <location>
        <position position="56"/>
    </location>
</feature>
<feature type="active site" evidence="2">
    <location>
        <position position="129"/>
    </location>
</feature>
<feature type="binding site" description="axial binding residue" evidence="1">
    <location>
        <position position="339"/>
    </location>
    <ligand>
        <name>heme</name>
        <dbReference type="ChEBI" id="CHEBI:30413"/>
    </ligand>
    <ligandPart>
        <name>Fe</name>
        <dbReference type="ChEBI" id="CHEBI:18248"/>
    </ligandPart>
</feature>
<reference key="1">
    <citation type="journal article" date="2000" name="Microbiology">
        <title>Catalase deficiency in Staphylococcus aureus subsp. anaerobius is associated with natural loss-of-function mutations within the structural gene.</title>
        <authorList>
            <person name="Sanz R."/>
            <person name="Marin I."/>
            <person name="Ruiz-Santa-Quiteria J.A."/>
            <person name="Orden J.A."/>
            <person name="Cid D."/>
            <person name="Diez R.M."/>
            <person name="Silhadi K.S."/>
            <person name="Amils R."/>
            <person name="de la Fuente R."/>
        </authorList>
    </citation>
    <scope>NUCLEOTIDE SEQUENCE [GENOMIC DNA]</scope>
    <source>
        <strain>ATCC 12600 / DSM 20231 / IAM 12544 / NCDO 949 / NCTC 8532</strain>
    </source>
</reference>
<protein>
    <recommendedName>
        <fullName>Catalase</fullName>
        <ecNumber>1.11.1.6</ecNumber>
    </recommendedName>
</protein>
<name>CATA_STAAU</name>
<keyword id="KW-0349">Heme</keyword>
<keyword id="KW-0376">Hydrogen peroxide</keyword>
<keyword id="KW-0408">Iron</keyword>
<keyword id="KW-0479">Metal-binding</keyword>
<keyword id="KW-0560">Oxidoreductase</keyword>
<keyword id="KW-0575">Peroxidase</keyword>
<evidence type="ECO:0000250" key="1"/>
<evidence type="ECO:0000255" key="2">
    <source>
        <dbReference type="PROSITE-ProRule" id="PRU10013"/>
    </source>
</evidence>
<evidence type="ECO:0000256" key="3">
    <source>
        <dbReference type="SAM" id="MobiDB-lite"/>
    </source>
</evidence>
<evidence type="ECO:0000305" key="4"/>
<comment type="function">
    <text evidence="1">Decomposes hydrogen peroxide into water and oxygen; serves to protect cells from the toxic effects of hydrogen peroxide.</text>
</comment>
<comment type="catalytic activity">
    <reaction evidence="2">
        <text>2 H2O2 = O2 + 2 H2O</text>
        <dbReference type="Rhea" id="RHEA:20309"/>
        <dbReference type="ChEBI" id="CHEBI:15377"/>
        <dbReference type="ChEBI" id="CHEBI:15379"/>
        <dbReference type="ChEBI" id="CHEBI:16240"/>
        <dbReference type="EC" id="1.11.1.6"/>
    </reaction>
</comment>
<comment type="cofactor">
    <cofactor evidence="1">
        <name>heme</name>
        <dbReference type="ChEBI" id="CHEBI:30413"/>
    </cofactor>
</comment>
<comment type="subunit">
    <text evidence="1">Homodimer.</text>
</comment>
<comment type="similarity">
    <text evidence="4">Belongs to the catalase family.</text>
</comment>
<sequence length="505" mass="58324">MSQQDKKLTGVFGHPVSDRENSMTAGPRGPLLMQDIYFLEQMSQFDREVIPERRMHAKGSGAFGTFTVTKDITKYTNAKIFSEIGKQTEMFARFSTVAGERGAADAERDIRGFALKFYTEEGNWDLVGNNTPVFFFRDPKLFVSLNRAVKRDPRTNMRDAQNNWDFWTGLPEALHQVTILMSDRGIPKDLRHMHGFGSHTYSMYNDSGERVWVKFHFRTQQGIENLTDEEAAEIIATDRDSSQRDLFEAIEKGDYPKWTMYIQVMTEEQAKNHKDNPFDLTKVWYHDEYPLIEVGEFELNRNPDNYFTDVEQAAFAPTNIIPGLDFSPDKMLQGRLFSYGDAQRYRLGVNHWQIPVNQPKGVGIENICPFSRDGQMRVVDNNQGGGTHHYPNNHGKFDSQPEYKKPPFPTDGYGYEYNQRQDDDNYFEQPGKLFRLQSEDAKERIFTNTANAMEGVTDDVKRRHIRHCYKADPEYGKGVAKALGIDINSIDLETENDETYENFEK</sequence>